<comment type="function">
    <text evidence="1">Binds directly to 23S ribosomal RNA and is necessary for the in vitro assembly process of the 50S ribosomal subunit. It is not involved in the protein synthesizing functions of that subunit.</text>
</comment>
<comment type="similarity">
    <text evidence="1">Belongs to the bacterial ribosomal protein bL20 family.</text>
</comment>
<protein>
    <recommendedName>
        <fullName evidence="1">Large ribosomal subunit protein bL20</fullName>
    </recommendedName>
    <alternativeName>
        <fullName evidence="2">50S ribosomal protein L20</fullName>
    </alternativeName>
</protein>
<feature type="chain" id="PRO_0000177176" description="Large ribosomal subunit protein bL20">
    <location>
        <begin position="1"/>
        <end position="119"/>
    </location>
</feature>
<feature type="helix" evidence="3">
    <location>
        <begin position="9"/>
        <end position="20"/>
    </location>
</feature>
<feature type="turn" evidence="3">
    <location>
        <begin position="21"/>
        <end position="23"/>
    </location>
</feature>
<feature type="helix" evidence="3">
    <location>
        <begin position="26"/>
        <end position="29"/>
    </location>
</feature>
<feature type="helix" evidence="3">
    <location>
        <begin position="32"/>
        <end position="70"/>
    </location>
</feature>
<feature type="turn" evidence="3">
    <location>
        <begin position="71"/>
        <end position="73"/>
    </location>
</feature>
<feature type="helix" evidence="3">
    <location>
        <begin position="76"/>
        <end position="86"/>
    </location>
</feature>
<feature type="helix" evidence="3">
    <location>
        <begin position="92"/>
        <end position="101"/>
    </location>
</feature>
<feature type="helix" evidence="3">
    <location>
        <begin position="103"/>
        <end position="116"/>
    </location>
</feature>
<proteinExistence type="evidence at protein level"/>
<sequence length="119" mass="13687">MPRVKGGTVTRKRRKKIVKLAKGYYGSKHLLFKVANQAVMKSYQYAYRDRRQKKRDFRRLWIARINAAARMQDLSYSKLMHGLKLAGIDINRKMLADLAVNDIASFNTLADSAKKALAK</sequence>
<accession>P66103</accession>
<accession>Q92AM5</accession>
<dbReference type="EMBL" id="AL591981">
    <property type="protein sequence ID" value="CAC99861.1"/>
    <property type="molecule type" value="Genomic_DNA"/>
</dbReference>
<dbReference type="PIR" id="AG1297">
    <property type="entry name" value="AG1297"/>
</dbReference>
<dbReference type="RefSeq" id="NP_465308.1">
    <property type="nucleotide sequence ID" value="NC_003210.1"/>
</dbReference>
<dbReference type="RefSeq" id="WP_003720097.1">
    <property type="nucleotide sequence ID" value="NZ_CP149495.1"/>
</dbReference>
<dbReference type="PDB" id="7NHN">
    <property type="method" value="EM"/>
    <property type="resolution" value="2.90 A"/>
    <property type="chains" value="T=1-119"/>
</dbReference>
<dbReference type="PDB" id="8A57">
    <property type="method" value="EM"/>
    <property type="resolution" value="2.30 A"/>
    <property type="chains" value="T=1-119"/>
</dbReference>
<dbReference type="PDB" id="8A5I">
    <property type="method" value="EM"/>
    <property type="resolution" value="2.30 A"/>
    <property type="chains" value="T=1-119"/>
</dbReference>
<dbReference type="PDB" id="8A63">
    <property type="method" value="EM"/>
    <property type="resolution" value="3.10 A"/>
    <property type="chains" value="T=1-119"/>
</dbReference>
<dbReference type="PDBsum" id="7NHN"/>
<dbReference type="PDBsum" id="8A57"/>
<dbReference type="PDBsum" id="8A5I"/>
<dbReference type="PDBsum" id="8A63"/>
<dbReference type="EMDB" id="EMD-12334"/>
<dbReference type="EMDB" id="EMD-15161"/>
<dbReference type="EMDB" id="EMD-15175"/>
<dbReference type="EMDB" id="EMD-15204"/>
<dbReference type="SMR" id="P66103"/>
<dbReference type="STRING" id="169963.gene:17594468"/>
<dbReference type="PaxDb" id="169963-lmo1783"/>
<dbReference type="EnsemblBacteria" id="CAC99861">
    <property type="protein sequence ID" value="CAC99861"/>
    <property type="gene ID" value="CAC99861"/>
</dbReference>
<dbReference type="GeneID" id="93239692"/>
<dbReference type="GeneID" id="985949"/>
<dbReference type="KEGG" id="lmo:lmo1783"/>
<dbReference type="PATRIC" id="fig|169963.11.peg.1827"/>
<dbReference type="eggNOG" id="COG0292">
    <property type="taxonomic scope" value="Bacteria"/>
</dbReference>
<dbReference type="HOGENOM" id="CLU_123265_0_1_9"/>
<dbReference type="OrthoDB" id="9808966at2"/>
<dbReference type="PhylomeDB" id="P66103"/>
<dbReference type="BioCyc" id="LMON169963:LMO1783-MONOMER"/>
<dbReference type="Proteomes" id="UP000000817">
    <property type="component" value="Chromosome"/>
</dbReference>
<dbReference type="GO" id="GO:0022625">
    <property type="term" value="C:cytosolic large ribosomal subunit"/>
    <property type="evidence" value="ECO:0000318"/>
    <property type="project" value="GO_Central"/>
</dbReference>
<dbReference type="GO" id="GO:0019843">
    <property type="term" value="F:rRNA binding"/>
    <property type="evidence" value="ECO:0007669"/>
    <property type="project" value="UniProtKB-UniRule"/>
</dbReference>
<dbReference type="GO" id="GO:0003735">
    <property type="term" value="F:structural constituent of ribosome"/>
    <property type="evidence" value="ECO:0000318"/>
    <property type="project" value="GO_Central"/>
</dbReference>
<dbReference type="GO" id="GO:0000027">
    <property type="term" value="P:ribosomal large subunit assembly"/>
    <property type="evidence" value="ECO:0007669"/>
    <property type="project" value="UniProtKB-UniRule"/>
</dbReference>
<dbReference type="GO" id="GO:0006412">
    <property type="term" value="P:translation"/>
    <property type="evidence" value="ECO:0007669"/>
    <property type="project" value="InterPro"/>
</dbReference>
<dbReference type="CDD" id="cd07026">
    <property type="entry name" value="Ribosomal_L20"/>
    <property type="match status" value="1"/>
</dbReference>
<dbReference type="FunFam" id="1.10.1900.20:FF:000001">
    <property type="entry name" value="50S ribosomal protein L20"/>
    <property type="match status" value="1"/>
</dbReference>
<dbReference type="Gene3D" id="6.10.160.10">
    <property type="match status" value="1"/>
</dbReference>
<dbReference type="Gene3D" id="1.10.1900.20">
    <property type="entry name" value="Ribosomal protein L20"/>
    <property type="match status" value="1"/>
</dbReference>
<dbReference type="HAMAP" id="MF_00382">
    <property type="entry name" value="Ribosomal_bL20"/>
    <property type="match status" value="1"/>
</dbReference>
<dbReference type="InterPro" id="IPR005813">
    <property type="entry name" value="Ribosomal_bL20"/>
</dbReference>
<dbReference type="InterPro" id="IPR049946">
    <property type="entry name" value="RIBOSOMAL_L20_CS"/>
</dbReference>
<dbReference type="InterPro" id="IPR035566">
    <property type="entry name" value="Ribosomal_protein_bL20_C"/>
</dbReference>
<dbReference type="NCBIfam" id="TIGR01032">
    <property type="entry name" value="rplT_bact"/>
    <property type="match status" value="1"/>
</dbReference>
<dbReference type="PANTHER" id="PTHR10986">
    <property type="entry name" value="39S RIBOSOMAL PROTEIN L20"/>
    <property type="match status" value="1"/>
</dbReference>
<dbReference type="Pfam" id="PF00453">
    <property type="entry name" value="Ribosomal_L20"/>
    <property type="match status" value="1"/>
</dbReference>
<dbReference type="PRINTS" id="PR00062">
    <property type="entry name" value="RIBOSOMALL20"/>
</dbReference>
<dbReference type="SUPFAM" id="SSF74731">
    <property type="entry name" value="Ribosomal protein L20"/>
    <property type="match status" value="1"/>
</dbReference>
<dbReference type="PROSITE" id="PS00937">
    <property type="entry name" value="RIBOSOMAL_L20"/>
    <property type="match status" value="1"/>
</dbReference>
<reference key="1">
    <citation type="journal article" date="2001" name="Science">
        <title>Comparative genomics of Listeria species.</title>
        <authorList>
            <person name="Glaser P."/>
            <person name="Frangeul L."/>
            <person name="Buchrieser C."/>
            <person name="Rusniok C."/>
            <person name="Amend A."/>
            <person name="Baquero F."/>
            <person name="Berche P."/>
            <person name="Bloecker H."/>
            <person name="Brandt P."/>
            <person name="Chakraborty T."/>
            <person name="Charbit A."/>
            <person name="Chetouani F."/>
            <person name="Couve E."/>
            <person name="de Daruvar A."/>
            <person name="Dehoux P."/>
            <person name="Domann E."/>
            <person name="Dominguez-Bernal G."/>
            <person name="Duchaud E."/>
            <person name="Durant L."/>
            <person name="Dussurget O."/>
            <person name="Entian K.-D."/>
            <person name="Fsihi H."/>
            <person name="Garcia-del Portillo F."/>
            <person name="Garrido P."/>
            <person name="Gautier L."/>
            <person name="Goebel W."/>
            <person name="Gomez-Lopez N."/>
            <person name="Hain T."/>
            <person name="Hauf J."/>
            <person name="Jackson D."/>
            <person name="Jones L.-M."/>
            <person name="Kaerst U."/>
            <person name="Kreft J."/>
            <person name="Kuhn M."/>
            <person name="Kunst F."/>
            <person name="Kurapkat G."/>
            <person name="Madueno E."/>
            <person name="Maitournam A."/>
            <person name="Mata Vicente J."/>
            <person name="Ng E."/>
            <person name="Nedjari H."/>
            <person name="Nordsiek G."/>
            <person name="Novella S."/>
            <person name="de Pablos B."/>
            <person name="Perez-Diaz J.-C."/>
            <person name="Purcell R."/>
            <person name="Remmel B."/>
            <person name="Rose M."/>
            <person name="Schlueter T."/>
            <person name="Simoes N."/>
            <person name="Tierrez A."/>
            <person name="Vazquez-Boland J.-A."/>
            <person name="Voss H."/>
            <person name="Wehland J."/>
            <person name="Cossart P."/>
        </authorList>
    </citation>
    <scope>NUCLEOTIDE SEQUENCE [LARGE SCALE GENOMIC DNA]</scope>
    <source>
        <strain>ATCC BAA-679 / EGD-e</strain>
    </source>
</reference>
<gene>
    <name evidence="1" type="primary">rplT</name>
    <name type="ordered locus">lmo1783</name>
</gene>
<name>RL20_LISMO</name>
<evidence type="ECO:0000255" key="1">
    <source>
        <dbReference type="HAMAP-Rule" id="MF_00382"/>
    </source>
</evidence>
<evidence type="ECO:0000305" key="2"/>
<evidence type="ECO:0007829" key="3">
    <source>
        <dbReference type="PDB" id="8A57"/>
    </source>
</evidence>
<organism>
    <name type="scientific">Listeria monocytogenes serovar 1/2a (strain ATCC BAA-679 / EGD-e)</name>
    <dbReference type="NCBI Taxonomy" id="169963"/>
    <lineage>
        <taxon>Bacteria</taxon>
        <taxon>Bacillati</taxon>
        <taxon>Bacillota</taxon>
        <taxon>Bacilli</taxon>
        <taxon>Bacillales</taxon>
        <taxon>Listeriaceae</taxon>
        <taxon>Listeria</taxon>
    </lineage>
</organism>
<keyword id="KW-0002">3D-structure</keyword>
<keyword id="KW-1185">Reference proteome</keyword>
<keyword id="KW-0687">Ribonucleoprotein</keyword>
<keyword id="KW-0689">Ribosomal protein</keyword>
<keyword id="KW-0694">RNA-binding</keyword>
<keyword id="KW-0699">rRNA-binding</keyword>